<keyword id="KW-0408">Iron</keyword>
<keyword id="KW-0411">Iron-sulfur</keyword>
<keyword id="KW-0479">Metal-binding</keyword>
<evidence type="ECO:0000255" key="1">
    <source>
        <dbReference type="HAMAP-Rule" id="MF_01380"/>
    </source>
</evidence>
<organism>
    <name type="scientific">Aliivibrio salmonicida (strain LFI1238)</name>
    <name type="common">Vibrio salmonicida (strain LFI1238)</name>
    <dbReference type="NCBI Taxonomy" id="316275"/>
    <lineage>
        <taxon>Bacteria</taxon>
        <taxon>Pseudomonadati</taxon>
        <taxon>Pseudomonadota</taxon>
        <taxon>Gammaproteobacteria</taxon>
        <taxon>Vibrionales</taxon>
        <taxon>Vibrionaceae</taxon>
        <taxon>Aliivibrio</taxon>
    </lineage>
</organism>
<dbReference type="EMBL" id="FM178379">
    <property type="protein sequence ID" value="CAQ80255.1"/>
    <property type="molecule type" value="Genomic_DNA"/>
</dbReference>
<dbReference type="RefSeq" id="WP_012551041.1">
    <property type="nucleotide sequence ID" value="NC_011312.1"/>
</dbReference>
<dbReference type="SMR" id="B6EL03"/>
<dbReference type="KEGG" id="vsa:VSAL_I2571"/>
<dbReference type="eggNOG" id="COG0316">
    <property type="taxonomic scope" value="Bacteria"/>
</dbReference>
<dbReference type="HOGENOM" id="CLU_069054_5_3_6"/>
<dbReference type="Proteomes" id="UP000001730">
    <property type="component" value="Chromosome 1"/>
</dbReference>
<dbReference type="GO" id="GO:0005829">
    <property type="term" value="C:cytosol"/>
    <property type="evidence" value="ECO:0007669"/>
    <property type="project" value="TreeGrafter"/>
</dbReference>
<dbReference type="GO" id="GO:0051537">
    <property type="term" value="F:2 iron, 2 sulfur cluster binding"/>
    <property type="evidence" value="ECO:0007669"/>
    <property type="project" value="TreeGrafter"/>
</dbReference>
<dbReference type="GO" id="GO:0051539">
    <property type="term" value="F:4 iron, 4 sulfur cluster binding"/>
    <property type="evidence" value="ECO:0007669"/>
    <property type="project" value="TreeGrafter"/>
</dbReference>
<dbReference type="GO" id="GO:0005506">
    <property type="term" value="F:iron ion binding"/>
    <property type="evidence" value="ECO:0007669"/>
    <property type="project" value="UniProtKB-UniRule"/>
</dbReference>
<dbReference type="GO" id="GO:0016226">
    <property type="term" value="P:iron-sulfur cluster assembly"/>
    <property type="evidence" value="ECO:0007669"/>
    <property type="project" value="UniProtKB-UniRule"/>
</dbReference>
<dbReference type="FunFam" id="2.60.300.12:FF:000002">
    <property type="entry name" value="Iron-sulfur cluster insertion protein ErpA"/>
    <property type="match status" value="1"/>
</dbReference>
<dbReference type="Gene3D" id="2.60.300.12">
    <property type="entry name" value="HesB-like domain"/>
    <property type="match status" value="1"/>
</dbReference>
<dbReference type="HAMAP" id="MF_01380">
    <property type="entry name" value="Fe_S_insert_ErpA"/>
    <property type="match status" value="1"/>
</dbReference>
<dbReference type="InterPro" id="IPR000361">
    <property type="entry name" value="FeS_biogenesis"/>
</dbReference>
<dbReference type="InterPro" id="IPR016092">
    <property type="entry name" value="FeS_cluster_insertion"/>
</dbReference>
<dbReference type="InterPro" id="IPR017870">
    <property type="entry name" value="FeS_cluster_insertion_CS"/>
</dbReference>
<dbReference type="InterPro" id="IPR023063">
    <property type="entry name" value="FeS_cluster_insertion_RrpA"/>
</dbReference>
<dbReference type="InterPro" id="IPR035903">
    <property type="entry name" value="HesB-like_dom_sf"/>
</dbReference>
<dbReference type="NCBIfam" id="TIGR00049">
    <property type="entry name" value="iron-sulfur cluster assembly accessory protein"/>
    <property type="match status" value="1"/>
</dbReference>
<dbReference type="NCBIfam" id="NF010147">
    <property type="entry name" value="PRK13623.1"/>
    <property type="match status" value="1"/>
</dbReference>
<dbReference type="PANTHER" id="PTHR43011">
    <property type="entry name" value="IRON-SULFUR CLUSTER ASSEMBLY 2 HOMOLOG, MITOCHONDRIAL"/>
    <property type="match status" value="1"/>
</dbReference>
<dbReference type="PANTHER" id="PTHR43011:SF1">
    <property type="entry name" value="IRON-SULFUR CLUSTER ASSEMBLY 2 HOMOLOG, MITOCHONDRIAL"/>
    <property type="match status" value="1"/>
</dbReference>
<dbReference type="Pfam" id="PF01521">
    <property type="entry name" value="Fe-S_biosyn"/>
    <property type="match status" value="1"/>
</dbReference>
<dbReference type="SUPFAM" id="SSF89360">
    <property type="entry name" value="HesB-like domain"/>
    <property type="match status" value="1"/>
</dbReference>
<dbReference type="PROSITE" id="PS01152">
    <property type="entry name" value="HESB"/>
    <property type="match status" value="1"/>
</dbReference>
<feature type="chain" id="PRO_1000144894" description="Iron-sulfur cluster insertion protein ErpA">
    <location>
        <begin position="1"/>
        <end position="113"/>
    </location>
</feature>
<feature type="binding site" evidence="1">
    <location>
        <position position="41"/>
    </location>
    <ligand>
        <name>iron-sulfur cluster</name>
        <dbReference type="ChEBI" id="CHEBI:30408"/>
    </ligand>
</feature>
<feature type="binding site" evidence="1">
    <location>
        <position position="105"/>
    </location>
    <ligand>
        <name>iron-sulfur cluster</name>
        <dbReference type="ChEBI" id="CHEBI:30408"/>
    </ligand>
</feature>
<feature type="binding site" evidence="1">
    <location>
        <position position="107"/>
    </location>
    <ligand>
        <name>iron-sulfur cluster</name>
        <dbReference type="ChEBI" id="CHEBI:30408"/>
    </ligand>
</feature>
<comment type="function">
    <text evidence="1">Required for insertion of 4Fe-4S clusters for at least IspG.</text>
</comment>
<comment type="cofactor">
    <cofactor evidence="1">
        <name>iron-sulfur cluster</name>
        <dbReference type="ChEBI" id="CHEBI:30408"/>
    </cofactor>
    <text evidence="1">Binds 1 iron-sulfur cluster per subunit.</text>
</comment>
<comment type="subunit">
    <text evidence="1">Homodimer.</text>
</comment>
<comment type="similarity">
    <text evidence="1">Belongs to the HesB/IscA family.</text>
</comment>
<name>ERPA_ALISL</name>
<protein>
    <recommendedName>
        <fullName evidence="1">Iron-sulfur cluster insertion protein ErpA</fullName>
    </recommendedName>
</protein>
<proteinExistence type="inferred from homology"/>
<sequence length="113" mass="12032">MSDVSVPLTFSDVAAAKVKTLIAEEENPNLKLRVYITGGGCSGFQYGFTFDEEVNEGDMTLVNDGVTLVVDPMSLQYLIGGIVDYTEGLEGSRFFINNPNATTTCGCGASFSV</sequence>
<reference key="1">
    <citation type="journal article" date="2008" name="BMC Genomics">
        <title>The genome sequence of the fish pathogen Aliivibrio salmonicida strain LFI1238 shows extensive evidence of gene decay.</title>
        <authorList>
            <person name="Hjerde E."/>
            <person name="Lorentzen M.S."/>
            <person name="Holden M.T."/>
            <person name="Seeger K."/>
            <person name="Paulsen S."/>
            <person name="Bason N."/>
            <person name="Churcher C."/>
            <person name="Harris D."/>
            <person name="Norbertczak H."/>
            <person name="Quail M.A."/>
            <person name="Sanders S."/>
            <person name="Thurston S."/>
            <person name="Parkhill J."/>
            <person name="Willassen N.P."/>
            <person name="Thomson N.R."/>
        </authorList>
    </citation>
    <scope>NUCLEOTIDE SEQUENCE [LARGE SCALE GENOMIC DNA]</scope>
    <source>
        <strain>LFI1238</strain>
    </source>
</reference>
<gene>
    <name evidence="1" type="primary">erpA</name>
    <name type="ordered locus">VSAL_I2571</name>
</gene>
<accession>B6EL03</accession>